<proteinExistence type="inferred from homology"/>
<gene>
    <name evidence="1" type="primary">MT-ND2</name>
    <name type="synonym">MTND2</name>
    <name type="synonym">NADH2</name>
    <name type="synonym">ND2</name>
</gene>
<reference key="1">
    <citation type="journal article" date="2002" name="Proc. Natl. Acad. Sci. U.S.A.">
        <title>Mammalian mitogenomic relationships and the root of the eutherian tree.</title>
        <authorList>
            <person name="Arnason U."/>
            <person name="Adegoke J.A."/>
            <person name="Bodin K."/>
            <person name="Born E.W."/>
            <person name="Esa Y.B."/>
            <person name="Gullberg A."/>
            <person name="Nilsson M."/>
            <person name="Short R.V."/>
            <person name="Xu X."/>
            <person name="Janke A."/>
        </authorList>
    </citation>
    <scope>NUCLEOTIDE SEQUENCE [GENOMIC DNA]</scope>
</reference>
<sequence>MNPLILSMILTTLAMGTMATMLSSNWLLAWMGLEMNMLAMIPILTMNPNPRSTEAATKYFLTQATASMLLMMAIMINFMLSGQWSITKLPNTTVSSMALAALMMKLGLAPFHFWVPEVTQGTSLTSGMILLTWQKLAPLSILYQIDTSVDITILTVSGLLSILVGGWGGLNQTQLRKILAYSSIAHMGWMLIIMPYNPSLTILNLLIYILMTLSIFMIMMNNHSTSTLTLALLWNKAPMMMILLTITLLSLGGLPPLSGFMPKWLIIHELTKNDSIILPMSMAMFALLNLYFYMRLIYSSSLTMFPSTNNMKMKWHFTNRSHLTLLPPLIILSTLTLPLTPFLSILE</sequence>
<organism>
    <name type="scientific">Dugong dugon</name>
    <name type="common">Dugong</name>
    <name type="synonym">Trichechus dugon</name>
    <dbReference type="NCBI Taxonomy" id="29137"/>
    <lineage>
        <taxon>Eukaryota</taxon>
        <taxon>Metazoa</taxon>
        <taxon>Chordata</taxon>
        <taxon>Craniata</taxon>
        <taxon>Vertebrata</taxon>
        <taxon>Euteleostomi</taxon>
        <taxon>Mammalia</taxon>
        <taxon>Eutheria</taxon>
        <taxon>Afrotheria</taxon>
        <taxon>Sirenia</taxon>
        <taxon>Dugongidae</taxon>
        <taxon>Dugong</taxon>
    </lineage>
</organism>
<feature type="chain" id="PRO_0000117585" description="NADH-ubiquinone oxidoreductase chain 2">
    <location>
        <begin position="1"/>
        <end position="347"/>
    </location>
</feature>
<feature type="transmembrane region" description="Helical" evidence="3">
    <location>
        <begin position="26"/>
        <end position="46"/>
    </location>
</feature>
<feature type="transmembrane region" description="Helical" evidence="3">
    <location>
        <begin position="60"/>
        <end position="80"/>
    </location>
</feature>
<feature type="transmembrane region" description="Helical" evidence="3">
    <location>
        <begin position="96"/>
        <end position="116"/>
    </location>
</feature>
<feature type="transmembrane region" description="Helical" evidence="3">
    <location>
        <begin position="123"/>
        <end position="143"/>
    </location>
</feature>
<feature type="transmembrane region" description="Helical" evidence="3">
    <location>
        <begin position="151"/>
        <end position="171"/>
    </location>
</feature>
<feature type="transmembrane region" description="Helical" evidence="3">
    <location>
        <begin position="178"/>
        <end position="198"/>
    </location>
</feature>
<feature type="transmembrane region" description="Helical" evidence="3">
    <location>
        <begin position="200"/>
        <end position="220"/>
    </location>
</feature>
<feature type="transmembrane region" description="Helical" evidence="3">
    <location>
        <begin position="240"/>
        <end position="260"/>
    </location>
</feature>
<feature type="transmembrane region" description="Helical" evidence="3">
    <location>
        <begin position="274"/>
        <end position="294"/>
    </location>
</feature>
<feature type="transmembrane region" description="Helical" evidence="3">
    <location>
        <begin position="325"/>
        <end position="345"/>
    </location>
</feature>
<comment type="function">
    <text evidence="1">Core subunit of the mitochondrial membrane respiratory chain NADH dehydrogenase (Complex I) which catalyzes electron transfer from NADH through the respiratory chain, using ubiquinone as an electron acceptor. Essential for the catalytic activity and assembly of complex I.</text>
</comment>
<comment type="catalytic activity">
    <reaction evidence="1">
        <text>a ubiquinone + NADH + 5 H(+)(in) = a ubiquinol + NAD(+) + 4 H(+)(out)</text>
        <dbReference type="Rhea" id="RHEA:29091"/>
        <dbReference type="Rhea" id="RHEA-COMP:9565"/>
        <dbReference type="Rhea" id="RHEA-COMP:9566"/>
        <dbReference type="ChEBI" id="CHEBI:15378"/>
        <dbReference type="ChEBI" id="CHEBI:16389"/>
        <dbReference type="ChEBI" id="CHEBI:17976"/>
        <dbReference type="ChEBI" id="CHEBI:57540"/>
        <dbReference type="ChEBI" id="CHEBI:57945"/>
        <dbReference type="EC" id="7.1.1.2"/>
    </reaction>
</comment>
<comment type="subunit">
    <text evidence="1 2">Core subunit of respiratory chain NADH dehydrogenase (Complex I) which is composed of 45 different subunits. Interacts with TMEM242 (By similarity).</text>
</comment>
<comment type="subcellular location">
    <subcellularLocation>
        <location evidence="2">Mitochondrion inner membrane</location>
        <topology evidence="3">Multi-pass membrane protein</topology>
    </subcellularLocation>
</comment>
<comment type="similarity">
    <text evidence="4">Belongs to the complex I subunit 2 family.</text>
</comment>
<geneLocation type="mitochondrion"/>
<name>NU2M_DUGDU</name>
<evidence type="ECO:0000250" key="1">
    <source>
        <dbReference type="UniProtKB" id="P03891"/>
    </source>
</evidence>
<evidence type="ECO:0000250" key="2">
    <source>
        <dbReference type="UniProtKB" id="P03892"/>
    </source>
</evidence>
<evidence type="ECO:0000255" key="3"/>
<evidence type="ECO:0000305" key="4"/>
<accession>Q8W9N5</accession>
<protein>
    <recommendedName>
        <fullName evidence="1">NADH-ubiquinone oxidoreductase chain 2</fullName>
        <ecNumber evidence="1">7.1.1.2</ecNumber>
    </recommendedName>
    <alternativeName>
        <fullName>NADH dehydrogenase subunit 2</fullName>
    </alternativeName>
</protein>
<dbReference type="EC" id="7.1.1.2" evidence="1"/>
<dbReference type="EMBL" id="AJ421723">
    <property type="protein sequence ID" value="CAD18909.1"/>
    <property type="molecule type" value="Genomic_DNA"/>
</dbReference>
<dbReference type="RefSeq" id="NP_536759.1">
    <property type="nucleotide sequence ID" value="NC_003314.1"/>
</dbReference>
<dbReference type="SMR" id="Q8W9N5"/>
<dbReference type="GeneID" id="804501"/>
<dbReference type="CTD" id="4536"/>
<dbReference type="GO" id="GO:0005743">
    <property type="term" value="C:mitochondrial inner membrane"/>
    <property type="evidence" value="ECO:0000250"/>
    <property type="project" value="UniProtKB"/>
</dbReference>
<dbReference type="GO" id="GO:0008137">
    <property type="term" value="F:NADH dehydrogenase (ubiquinone) activity"/>
    <property type="evidence" value="ECO:0000250"/>
    <property type="project" value="UniProtKB"/>
</dbReference>
<dbReference type="GO" id="GO:0006120">
    <property type="term" value="P:mitochondrial electron transport, NADH to ubiquinone"/>
    <property type="evidence" value="ECO:0000250"/>
    <property type="project" value="UniProtKB"/>
</dbReference>
<dbReference type="GO" id="GO:0032981">
    <property type="term" value="P:mitochondrial respiratory chain complex I assembly"/>
    <property type="evidence" value="ECO:0000250"/>
    <property type="project" value="UniProtKB"/>
</dbReference>
<dbReference type="InterPro" id="IPR050175">
    <property type="entry name" value="Complex_I_Subunit_2"/>
</dbReference>
<dbReference type="InterPro" id="IPR010933">
    <property type="entry name" value="NADH_DH_su2_C"/>
</dbReference>
<dbReference type="InterPro" id="IPR003917">
    <property type="entry name" value="NADH_UbQ_OxRdtase_chain2"/>
</dbReference>
<dbReference type="InterPro" id="IPR001750">
    <property type="entry name" value="ND/Mrp_TM"/>
</dbReference>
<dbReference type="PANTHER" id="PTHR46552">
    <property type="entry name" value="NADH-UBIQUINONE OXIDOREDUCTASE CHAIN 2"/>
    <property type="match status" value="1"/>
</dbReference>
<dbReference type="PANTHER" id="PTHR46552:SF1">
    <property type="entry name" value="NADH-UBIQUINONE OXIDOREDUCTASE CHAIN 2"/>
    <property type="match status" value="1"/>
</dbReference>
<dbReference type="Pfam" id="PF06444">
    <property type="entry name" value="NADH_dehy_S2_C"/>
    <property type="match status" value="1"/>
</dbReference>
<dbReference type="Pfam" id="PF00361">
    <property type="entry name" value="Proton_antipo_M"/>
    <property type="match status" value="1"/>
</dbReference>
<dbReference type="PRINTS" id="PR01436">
    <property type="entry name" value="NADHDHGNASE2"/>
</dbReference>
<keyword id="KW-0249">Electron transport</keyword>
<keyword id="KW-0472">Membrane</keyword>
<keyword id="KW-0496">Mitochondrion</keyword>
<keyword id="KW-0999">Mitochondrion inner membrane</keyword>
<keyword id="KW-0520">NAD</keyword>
<keyword id="KW-0679">Respiratory chain</keyword>
<keyword id="KW-1278">Translocase</keyword>
<keyword id="KW-0812">Transmembrane</keyword>
<keyword id="KW-1133">Transmembrane helix</keyword>
<keyword id="KW-0813">Transport</keyword>
<keyword id="KW-0830">Ubiquinone</keyword>